<gene>
    <name type="primary">GPATCH3</name>
    <name type="synonym">GPATC3</name>
</gene>
<dbReference type="EMBL" id="AK022517">
    <property type="protein sequence ID" value="BAB14074.1"/>
    <property type="molecule type" value="mRNA"/>
</dbReference>
<dbReference type="EMBL" id="AL833886">
    <property type="protein sequence ID" value="CAD38742.1"/>
    <property type="status" value="ALT_INIT"/>
    <property type="molecule type" value="mRNA"/>
</dbReference>
<dbReference type="EMBL" id="AL356390">
    <property type="status" value="NOT_ANNOTATED_CDS"/>
    <property type="molecule type" value="Genomic_DNA"/>
</dbReference>
<dbReference type="EMBL" id="AL034380">
    <property type="status" value="NOT_ANNOTATED_CDS"/>
    <property type="molecule type" value="Genomic_DNA"/>
</dbReference>
<dbReference type="EMBL" id="BC007767">
    <property type="protein sequence ID" value="AAH07767.1"/>
    <property type="molecule type" value="mRNA"/>
</dbReference>
<dbReference type="CCDS" id="CCDS290.1"/>
<dbReference type="RefSeq" id="NP_071361.2">
    <property type="nucleotide sequence ID" value="NM_022078.3"/>
</dbReference>
<dbReference type="BioGRID" id="121982">
    <property type="interactions" value="5"/>
</dbReference>
<dbReference type="FunCoup" id="Q96I76">
    <property type="interactions" value="3246"/>
</dbReference>
<dbReference type="IntAct" id="Q96I76">
    <property type="interactions" value="4"/>
</dbReference>
<dbReference type="STRING" id="9606.ENSP00000354645"/>
<dbReference type="iPTMnet" id="Q96I76"/>
<dbReference type="PhosphoSitePlus" id="Q96I76"/>
<dbReference type="BioMuta" id="GPATCH3"/>
<dbReference type="DMDM" id="57012858"/>
<dbReference type="jPOST" id="Q96I76"/>
<dbReference type="MassIVE" id="Q96I76"/>
<dbReference type="PaxDb" id="9606-ENSP00000354645"/>
<dbReference type="PeptideAtlas" id="Q96I76"/>
<dbReference type="ProteomicsDB" id="76815"/>
<dbReference type="Pumba" id="Q96I76"/>
<dbReference type="TopDownProteomics" id="Q96I76"/>
<dbReference type="Antibodypedia" id="35286">
    <property type="antibodies" value="29 antibodies from 12 providers"/>
</dbReference>
<dbReference type="DNASU" id="63906"/>
<dbReference type="Ensembl" id="ENST00000361720.10">
    <property type="protein sequence ID" value="ENSP00000354645.5"/>
    <property type="gene ID" value="ENSG00000198746.13"/>
</dbReference>
<dbReference type="GeneID" id="63906"/>
<dbReference type="KEGG" id="hsa:63906"/>
<dbReference type="MANE-Select" id="ENST00000361720.10">
    <property type="protein sequence ID" value="ENSP00000354645.5"/>
    <property type="RefSeq nucleotide sequence ID" value="NM_022078.3"/>
    <property type="RefSeq protein sequence ID" value="NP_071361.2"/>
</dbReference>
<dbReference type="UCSC" id="uc001bne.4">
    <property type="organism name" value="human"/>
</dbReference>
<dbReference type="AGR" id="HGNC:25720"/>
<dbReference type="CTD" id="63906"/>
<dbReference type="DisGeNET" id="63906"/>
<dbReference type="GeneCards" id="GPATCH3"/>
<dbReference type="HGNC" id="HGNC:25720">
    <property type="gene designation" value="GPATCH3"/>
</dbReference>
<dbReference type="HPA" id="ENSG00000198746">
    <property type="expression patterns" value="Low tissue specificity"/>
</dbReference>
<dbReference type="MIM" id="617486">
    <property type="type" value="gene"/>
</dbReference>
<dbReference type="neXtProt" id="NX_Q96I76"/>
<dbReference type="OpenTargets" id="ENSG00000198746"/>
<dbReference type="PharmGKB" id="PA162390065"/>
<dbReference type="VEuPathDB" id="HostDB:ENSG00000198746"/>
<dbReference type="eggNOG" id="ENOG502QQ66">
    <property type="taxonomic scope" value="Eukaryota"/>
</dbReference>
<dbReference type="GeneTree" id="ENSGT00390000004191"/>
<dbReference type="HOGENOM" id="CLU_025388_0_0_1"/>
<dbReference type="InParanoid" id="Q96I76"/>
<dbReference type="OMA" id="GGFHCFH"/>
<dbReference type="OrthoDB" id="5842926at2759"/>
<dbReference type="PAN-GO" id="Q96I76">
    <property type="GO annotations" value="3 GO annotations based on evolutionary models"/>
</dbReference>
<dbReference type="PhylomeDB" id="Q96I76"/>
<dbReference type="TreeFam" id="TF314766"/>
<dbReference type="PathwayCommons" id="Q96I76"/>
<dbReference type="SignaLink" id="Q96I76"/>
<dbReference type="BioGRID-ORCS" id="63906">
    <property type="hits" value="17 hits in 1156 CRISPR screens"/>
</dbReference>
<dbReference type="ChiTaRS" id="GPATCH3">
    <property type="organism name" value="human"/>
</dbReference>
<dbReference type="GenomeRNAi" id="63906"/>
<dbReference type="Pharos" id="Q96I76">
    <property type="development level" value="Tbio"/>
</dbReference>
<dbReference type="PRO" id="PR:Q96I76"/>
<dbReference type="Proteomes" id="UP000005640">
    <property type="component" value="Chromosome 1"/>
</dbReference>
<dbReference type="RNAct" id="Q96I76">
    <property type="molecule type" value="protein"/>
</dbReference>
<dbReference type="Bgee" id="ENSG00000198746">
    <property type="expression patterns" value="Expressed in primordial germ cell in gonad and 107 other cell types or tissues"/>
</dbReference>
<dbReference type="ExpressionAtlas" id="Q96I76">
    <property type="expression patterns" value="baseline and differential"/>
</dbReference>
<dbReference type="GO" id="GO:0005737">
    <property type="term" value="C:cytoplasm"/>
    <property type="evidence" value="ECO:0000314"/>
    <property type="project" value="UniProtKB"/>
</dbReference>
<dbReference type="GO" id="GO:0005829">
    <property type="term" value="C:cytosol"/>
    <property type="evidence" value="ECO:0000314"/>
    <property type="project" value="HPA"/>
</dbReference>
<dbReference type="GO" id="GO:0005654">
    <property type="term" value="C:nucleoplasm"/>
    <property type="evidence" value="ECO:0000314"/>
    <property type="project" value="HPA"/>
</dbReference>
<dbReference type="GO" id="GO:0005634">
    <property type="term" value="C:nucleus"/>
    <property type="evidence" value="ECO:0000314"/>
    <property type="project" value="UniProtKB"/>
</dbReference>
<dbReference type="GO" id="GO:0003676">
    <property type="term" value="F:nucleic acid binding"/>
    <property type="evidence" value="ECO:0007669"/>
    <property type="project" value="InterPro"/>
</dbReference>
<dbReference type="GO" id="GO:0039536">
    <property type="term" value="P:negative regulation of RIG-I signaling pathway"/>
    <property type="evidence" value="ECO:0000315"/>
    <property type="project" value="UniProtKB"/>
</dbReference>
<dbReference type="GO" id="GO:0032480">
    <property type="term" value="P:negative regulation of type I interferon production"/>
    <property type="evidence" value="ECO:0000315"/>
    <property type="project" value="UniProtKB"/>
</dbReference>
<dbReference type="GO" id="GO:0045893">
    <property type="term" value="P:positive regulation of DNA-templated transcription"/>
    <property type="evidence" value="ECO:0000314"/>
    <property type="project" value="UniProtKB"/>
</dbReference>
<dbReference type="InterPro" id="IPR000467">
    <property type="entry name" value="G_patch_dom"/>
</dbReference>
<dbReference type="InterPro" id="IPR040341">
    <property type="entry name" value="GPATCH3"/>
</dbReference>
<dbReference type="PANTHER" id="PTHR14390">
    <property type="entry name" value="G PATCH DOMAIN CONTAINING PROTEIN 3"/>
    <property type="match status" value="1"/>
</dbReference>
<dbReference type="PANTHER" id="PTHR14390:SF2">
    <property type="entry name" value="G PATCH DOMAIN-CONTAINING PROTEIN 3"/>
    <property type="match status" value="1"/>
</dbReference>
<dbReference type="Pfam" id="PF01585">
    <property type="entry name" value="G-patch"/>
    <property type="match status" value="1"/>
</dbReference>
<dbReference type="SMART" id="SM00443">
    <property type="entry name" value="G_patch"/>
    <property type="match status" value="1"/>
</dbReference>
<dbReference type="PROSITE" id="PS50174">
    <property type="entry name" value="G_PATCH"/>
    <property type="match status" value="1"/>
</dbReference>
<feature type="chain" id="PRO_0000087568" description="G patch domain-containing protein 3">
    <location>
        <begin position="1"/>
        <end position="525"/>
    </location>
</feature>
<feature type="domain" description="G-patch" evidence="1">
    <location>
        <begin position="410"/>
        <end position="458"/>
    </location>
</feature>
<feature type="region of interest" description="Disordered" evidence="2">
    <location>
        <begin position="264"/>
        <end position="316"/>
    </location>
</feature>
<feature type="compositionally biased region" description="Acidic residues" evidence="2">
    <location>
        <begin position="275"/>
        <end position="298"/>
    </location>
</feature>
<feature type="compositionally biased region" description="Basic and acidic residues" evidence="2">
    <location>
        <begin position="299"/>
        <end position="316"/>
    </location>
</feature>
<feature type="sequence variant" id="VAR_079015" description="Found in a patient with primary congenital glaucoma; uncertain significance; dbSNP:rs764461662." evidence="3">
    <original>V</original>
    <variation>M</variation>
    <location>
        <position position="23"/>
    </location>
</feature>
<feature type="sequence variant" id="VAR_079016" description="Found in a patient with secondary congenital glaucoma with anterior segment dysgenesis and microphthalmia; uncertain significance; dbSNP:rs879261101." evidence="3">
    <original>R</original>
    <variation>C</variation>
    <location>
        <position position="137"/>
    </location>
</feature>
<feature type="sequence variant" id="VAR_051015" description="Found in patients with primary congenital glaucoma; uncertain significance; slightly increased transactivation activity on CXCR4 promoter; no effect on nuclear localization; dbSNP:rs35243557." evidence="3">
    <original>N</original>
    <variation>S</variation>
    <location>
        <position position="234"/>
    </location>
</feature>
<feature type="sequence variant" id="VAR_079017" description="Found in a patient with primary congenital glaucoma; uncertain significance; slightly increased transactivation activity on CXCR4 promoter; no effect on nuclear localization; dbSNP:rs376709877." evidence="3">
    <original>G</original>
    <variation>E</variation>
    <location>
        <position position="475"/>
    </location>
</feature>
<feature type="sequence conflict" description="In Ref. 1; BAB14074." evidence="5" ref="1">
    <original>S</original>
    <variation>P</variation>
    <location>
        <position position="154"/>
    </location>
</feature>
<feature type="sequence conflict" description="In Ref. 1; BAB14074." evidence="5" ref="1">
    <original>Y</original>
    <variation>C</variation>
    <location>
        <position position="252"/>
    </location>
</feature>
<evidence type="ECO:0000255" key="1">
    <source>
        <dbReference type="PROSITE-ProRule" id="PRU00092"/>
    </source>
</evidence>
<evidence type="ECO:0000256" key="2">
    <source>
        <dbReference type="SAM" id="MobiDB-lite"/>
    </source>
</evidence>
<evidence type="ECO:0000269" key="3">
    <source>
    </source>
</evidence>
<evidence type="ECO:0000269" key="4">
    <source>
    </source>
</evidence>
<evidence type="ECO:0000305" key="5"/>
<name>GPTC3_HUMAN</name>
<proteinExistence type="evidence at protein level"/>
<keyword id="KW-0963">Cytoplasm</keyword>
<keyword id="KW-0225">Disease variant</keyword>
<keyword id="KW-0955">Glaucoma</keyword>
<keyword id="KW-0539">Nucleus</keyword>
<keyword id="KW-1267">Proteomics identification</keyword>
<keyword id="KW-1185">Reference proteome</keyword>
<keyword id="KW-0804">Transcription</keyword>
<keyword id="KW-0805">Transcription regulation</keyword>
<organism>
    <name type="scientific">Homo sapiens</name>
    <name type="common">Human</name>
    <dbReference type="NCBI Taxonomy" id="9606"/>
    <lineage>
        <taxon>Eukaryota</taxon>
        <taxon>Metazoa</taxon>
        <taxon>Chordata</taxon>
        <taxon>Craniata</taxon>
        <taxon>Vertebrata</taxon>
        <taxon>Euteleostomi</taxon>
        <taxon>Mammalia</taxon>
        <taxon>Eutheria</taxon>
        <taxon>Euarchontoglires</taxon>
        <taxon>Primates</taxon>
        <taxon>Haplorrhini</taxon>
        <taxon>Catarrhini</taxon>
        <taxon>Hominidae</taxon>
        <taxon>Homo</taxon>
    </lineage>
</organism>
<protein>
    <recommendedName>
        <fullName>G patch domain-containing protein 3</fullName>
    </recommendedName>
</protein>
<accession>Q96I76</accession>
<accession>Q5JYH2</accession>
<accession>Q8NDJ2</accession>
<accession>Q9H9Z3</accession>
<comment type="function">
    <text evidence="3 4">Involved in transcriptional regulation. It is able to activate transcription from the CXCR4 promoter and therefore it might control neural crest cell migration involved in ocular and craniofacial development (PubMed:28397860). Is a negative regulator of immune antiviral response, acting via down-regulation of RIG-I-like receptors signaling and inhibition of type I interferon production. The control mechanism involves interaction with mitochondrial MAVS and inhibition of MAVS assembly with downstream proteins implicated in antiviral response, such as TBK1 and TRAF6 (PubMed:28414768).</text>
</comment>
<comment type="subunit">
    <text evidence="4">Interacts with mitochondrial MAVS; the interaction is markedly increased upon viral infection.</text>
</comment>
<comment type="subcellular location">
    <subcellularLocation>
        <location evidence="3">Nucleus</location>
    </subcellularLocation>
    <subcellularLocation>
        <location evidence="3">Cytoplasm</location>
    </subcellularLocation>
</comment>
<comment type="tissue specificity">
    <text evidence="3">Expressed in ocular tissues including retinal pigment epithelium, cornea, ciliary muscle and non-pigmented ciliary epithelium. Also expressed in optic nerve, cartilage, skin and lymph node.</text>
</comment>
<comment type="disease">
    <text evidence="3">GPATCH3 variants may be involved in the pathogenesis of congenital glaucoma, an ocular disease characterized by marked increase of intraocular pressure at birth or early childhood, large ocular globes (buphthalmos) and corneal edema. It results from developmental defects of the trabecular meshwork and anterior chamber angle of the eye that prevent adequate drainage of aqueous humor.</text>
</comment>
<comment type="sequence caution" evidence="5">
    <conflict type="erroneous initiation">
        <sequence resource="EMBL-CDS" id="CAD38742"/>
    </conflict>
</comment>
<sequence>MAVPGEAEEEATVYLVVSGIPSVLRSAHLRSYFSQFREERGGGFLCFHYRHRPERAPPQAAPNSALIPTDPAAEGQLLSQTSATDVRPLSTRDSTPIQTRTCCCVISVRGLAQAQRLIRMYSGRRWLDSHGTWLPGRCLIRRLRLPTEASGLGSFPFKTRKELQSWKAENEAFTLADLKQLPELNPPVLMPRGNVGTPLRVFLELIRACRLPPRIITQLQLQFPKTGSSRRYGNVPFEYEDSETVEQEELVYTAEGEEIPQGTYLADIPASPCGEPEEEVGKEEEEESHSDEDDDRGEEWERHEALHEDVTGQERTTEQLFEEEIELKWEKGGSGLVFYTDAQFWQEEEGDFDEQTADDWDVDMSVYYDRDGGDKDARDSVQMRLEQRLRDGQEDGSVIERQVGTFERHTKGIGRKVMERQGWAEGQGLGCRCSGVPEALDSDGQHPRCKRGLGYHGEKLQPFGQLKRPRRNGLGLISTIYDEPLPQDQTESLLRRQPPTSMKFRTDMAFVRGSSCASDSPSLPD</sequence>
<reference key="1">
    <citation type="journal article" date="2004" name="Nat. Genet.">
        <title>Complete sequencing and characterization of 21,243 full-length human cDNAs.</title>
        <authorList>
            <person name="Ota T."/>
            <person name="Suzuki Y."/>
            <person name="Nishikawa T."/>
            <person name="Otsuki T."/>
            <person name="Sugiyama T."/>
            <person name="Irie R."/>
            <person name="Wakamatsu A."/>
            <person name="Hayashi K."/>
            <person name="Sato H."/>
            <person name="Nagai K."/>
            <person name="Kimura K."/>
            <person name="Makita H."/>
            <person name="Sekine M."/>
            <person name="Obayashi M."/>
            <person name="Nishi T."/>
            <person name="Shibahara T."/>
            <person name="Tanaka T."/>
            <person name="Ishii S."/>
            <person name="Yamamoto J."/>
            <person name="Saito K."/>
            <person name="Kawai Y."/>
            <person name="Isono Y."/>
            <person name="Nakamura Y."/>
            <person name="Nagahari K."/>
            <person name="Murakami K."/>
            <person name="Yasuda T."/>
            <person name="Iwayanagi T."/>
            <person name="Wagatsuma M."/>
            <person name="Shiratori A."/>
            <person name="Sudo H."/>
            <person name="Hosoiri T."/>
            <person name="Kaku Y."/>
            <person name="Kodaira H."/>
            <person name="Kondo H."/>
            <person name="Sugawara M."/>
            <person name="Takahashi M."/>
            <person name="Kanda K."/>
            <person name="Yokoi T."/>
            <person name="Furuya T."/>
            <person name="Kikkawa E."/>
            <person name="Omura Y."/>
            <person name="Abe K."/>
            <person name="Kamihara K."/>
            <person name="Katsuta N."/>
            <person name="Sato K."/>
            <person name="Tanikawa M."/>
            <person name="Yamazaki M."/>
            <person name="Ninomiya K."/>
            <person name="Ishibashi T."/>
            <person name="Yamashita H."/>
            <person name="Murakawa K."/>
            <person name="Fujimori K."/>
            <person name="Tanai H."/>
            <person name="Kimata M."/>
            <person name="Watanabe M."/>
            <person name="Hiraoka S."/>
            <person name="Chiba Y."/>
            <person name="Ishida S."/>
            <person name="Ono Y."/>
            <person name="Takiguchi S."/>
            <person name="Watanabe S."/>
            <person name="Yosida M."/>
            <person name="Hotuta T."/>
            <person name="Kusano J."/>
            <person name="Kanehori K."/>
            <person name="Takahashi-Fujii A."/>
            <person name="Hara H."/>
            <person name="Tanase T.-O."/>
            <person name="Nomura Y."/>
            <person name="Togiya S."/>
            <person name="Komai F."/>
            <person name="Hara R."/>
            <person name="Takeuchi K."/>
            <person name="Arita M."/>
            <person name="Imose N."/>
            <person name="Musashino K."/>
            <person name="Yuuki H."/>
            <person name="Oshima A."/>
            <person name="Sasaki N."/>
            <person name="Aotsuka S."/>
            <person name="Yoshikawa Y."/>
            <person name="Matsunawa H."/>
            <person name="Ichihara T."/>
            <person name="Shiohata N."/>
            <person name="Sano S."/>
            <person name="Moriya S."/>
            <person name="Momiyama H."/>
            <person name="Satoh N."/>
            <person name="Takami S."/>
            <person name="Terashima Y."/>
            <person name="Suzuki O."/>
            <person name="Nakagawa S."/>
            <person name="Senoh A."/>
            <person name="Mizoguchi H."/>
            <person name="Goto Y."/>
            <person name="Shimizu F."/>
            <person name="Wakebe H."/>
            <person name="Hishigaki H."/>
            <person name="Watanabe T."/>
            <person name="Sugiyama A."/>
            <person name="Takemoto M."/>
            <person name="Kawakami B."/>
            <person name="Yamazaki M."/>
            <person name="Watanabe K."/>
            <person name="Kumagai A."/>
            <person name="Itakura S."/>
            <person name="Fukuzumi Y."/>
            <person name="Fujimori Y."/>
            <person name="Komiyama M."/>
            <person name="Tashiro H."/>
            <person name="Tanigami A."/>
            <person name="Fujiwara T."/>
            <person name="Ono T."/>
            <person name="Yamada K."/>
            <person name="Fujii Y."/>
            <person name="Ozaki K."/>
            <person name="Hirao M."/>
            <person name="Ohmori Y."/>
            <person name="Kawabata A."/>
            <person name="Hikiji T."/>
            <person name="Kobatake N."/>
            <person name="Inagaki H."/>
            <person name="Ikema Y."/>
            <person name="Okamoto S."/>
            <person name="Okitani R."/>
            <person name="Kawakami T."/>
            <person name="Noguchi S."/>
            <person name="Itoh T."/>
            <person name="Shigeta K."/>
            <person name="Senba T."/>
            <person name="Matsumura K."/>
            <person name="Nakajima Y."/>
            <person name="Mizuno T."/>
            <person name="Morinaga M."/>
            <person name="Sasaki M."/>
            <person name="Togashi T."/>
            <person name="Oyama M."/>
            <person name="Hata H."/>
            <person name="Watanabe M."/>
            <person name="Komatsu T."/>
            <person name="Mizushima-Sugano J."/>
            <person name="Satoh T."/>
            <person name="Shirai Y."/>
            <person name="Takahashi Y."/>
            <person name="Nakagawa K."/>
            <person name="Okumura K."/>
            <person name="Nagase T."/>
            <person name="Nomura N."/>
            <person name="Kikuchi H."/>
            <person name="Masuho Y."/>
            <person name="Yamashita R."/>
            <person name="Nakai K."/>
            <person name="Yada T."/>
            <person name="Nakamura Y."/>
            <person name="Ohara O."/>
            <person name="Isogai T."/>
            <person name="Sugano S."/>
        </authorList>
    </citation>
    <scope>NUCLEOTIDE SEQUENCE [LARGE SCALE MRNA]</scope>
</reference>
<reference key="2">
    <citation type="journal article" date="2007" name="BMC Genomics">
        <title>The full-ORF clone resource of the German cDNA consortium.</title>
        <authorList>
            <person name="Bechtel S."/>
            <person name="Rosenfelder H."/>
            <person name="Duda A."/>
            <person name="Schmidt C.P."/>
            <person name="Ernst U."/>
            <person name="Wellenreuther R."/>
            <person name="Mehrle A."/>
            <person name="Schuster C."/>
            <person name="Bahr A."/>
            <person name="Bloecker H."/>
            <person name="Heubner D."/>
            <person name="Hoerlein A."/>
            <person name="Michel G."/>
            <person name="Wedler H."/>
            <person name="Koehrer K."/>
            <person name="Ottenwaelder B."/>
            <person name="Poustka A."/>
            <person name="Wiemann S."/>
            <person name="Schupp I."/>
        </authorList>
    </citation>
    <scope>NUCLEOTIDE SEQUENCE [LARGE SCALE MRNA]</scope>
    <source>
        <tissue>Brain</tissue>
    </source>
</reference>
<reference key="3">
    <citation type="journal article" date="2006" name="Nature">
        <title>The DNA sequence and biological annotation of human chromosome 1.</title>
        <authorList>
            <person name="Gregory S.G."/>
            <person name="Barlow K.F."/>
            <person name="McLay K.E."/>
            <person name="Kaul R."/>
            <person name="Swarbreck D."/>
            <person name="Dunham A."/>
            <person name="Scott C.E."/>
            <person name="Howe K.L."/>
            <person name="Woodfine K."/>
            <person name="Spencer C.C.A."/>
            <person name="Jones M.C."/>
            <person name="Gillson C."/>
            <person name="Searle S."/>
            <person name="Zhou Y."/>
            <person name="Kokocinski F."/>
            <person name="McDonald L."/>
            <person name="Evans R."/>
            <person name="Phillips K."/>
            <person name="Atkinson A."/>
            <person name="Cooper R."/>
            <person name="Jones C."/>
            <person name="Hall R.E."/>
            <person name="Andrews T.D."/>
            <person name="Lloyd C."/>
            <person name="Ainscough R."/>
            <person name="Almeida J.P."/>
            <person name="Ambrose K.D."/>
            <person name="Anderson F."/>
            <person name="Andrew R.W."/>
            <person name="Ashwell R.I.S."/>
            <person name="Aubin K."/>
            <person name="Babbage A.K."/>
            <person name="Bagguley C.L."/>
            <person name="Bailey J."/>
            <person name="Beasley H."/>
            <person name="Bethel G."/>
            <person name="Bird C.P."/>
            <person name="Bray-Allen S."/>
            <person name="Brown J.Y."/>
            <person name="Brown A.J."/>
            <person name="Buckley D."/>
            <person name="Burton J."/>
            <person name="Bye J."/>
            <person name="Carder C."/>
            <person name="Chapman J.C."/>
            <person name="Clark S.Y."/>
            <person name="Clarke G."/>
            <person name="Clee C."/>
            <person name="Cobley V."/>
            <person name="Collier R.E."/>
            <person name="Corby N."/>
            <person name="Coville G.J."/>
            <person name="Davies J."/>
            <person name="Deadman R."/>
            <person name="Dunn M."/>
            <person name="Earthrowl M."/>
            <person name="Ellington A.G."/>
            <person name="Errington H."/>
            <person name="Frankish A."/>
            <person name="Frankland J."/>
            <person name="French L."/>
            <person name="Garner P."/>
            <person name="Garnett J."/>
            <person name="Gay L."/>
            <person name="Ghori M.R.J."/>
            <person name="Gibson R."/>
            <person name="Gilby L.M."/>
            <person name="Gillett W."/>
            <person name="Glithero R.J."/>
            <person name="Grafham D.V."/>
            <person name="Griffiths C."/>
            <person name="Griffiths-Jones S."/>
            <person name="Grocock R."/>
            <person name="Hammond S."/>
            <person name="Harrison E.S.I."/>
            <person name="Hart E."/>
            <person name="Haugen E."/>
            <person name="Heath P.D."/>
            <person name="Holmes S."/>
            <person name="Holt K."/>
            <person name="Howden P.J."/>
            <person name="Hunt A.R."/>
            <person name="Hunt S.E."/>
            <person name="Hunter G."/>
            <person name="Isherwood J."/>
            <person name="James R."/>
            <person name="Johnson C."/>
            <person name="Johnson D."/>
            <person name="Joy A."/>
            <person name="Kay M."/>
            <person name="Kershaw J.K."/>
            <person name="Kibukawa M."/>
            <person name="Kimberley A.M."/>
            <person name="King A."/>
            <person name="Knights A.J."/>
            <person name="Lad H."/>
            <person name="Laird G."/>
            <person name="Lawlor S."/>
            <person name="Leongamornlert D.A."/>
            <person name="Lloyd D.M."/>
            <person name="Loveland J."/>
            <person name="Lovell J."/>
            <person name="Lush M.J."/>
            <person name="Lyne R."/>
            <person name="Martin S."/>
            <person name="Mashreghi-Mohammadi M."/>
            <person name="Matthews L."/>
            <person name="Matthews N.S.W."/>
            <person name="McLaren S."/>
            <person name="Milne S."/>
            <person name="Mistry S."/>
            <person name="Moore M.J.F."/>
            <person name="Nickerson T."/>
            <person name="O'Dell C.N."/>
            <person name="Oliver K."/>
            <person name="Palmeiri A."/>
            <person name="Palmer S.A."/>
            <person name="Parker A."/>
            <person name="Patel D."/>
            <person name="Pearce A.V."/>
            <person name="Peck A.I."/>
            <person name="Pelan S."/>
            <person name="Phelps K."/>
            <person name="Phillimore B.J."/>
            <person name="Plumb R."/>
            <person name="Rajan J."/>
            <person name="Raymond C."/>
            <person name="Rouse G."/>
            <person name="Saenphimmachak C."/>
            <person name="Sehra H.K."/>
            <person name="Sheridan E."/>
            <person name="Shownkeen R."/>
            <person name="Sims S."/>
            <person name="Skuce C.D."/>
            <person name="Smith M."/>
            <person name="Steward C."/>
            <person name="Subramanian S."/>
            <person name="Sycamore N."/>
            <person name="Tracey A."/>
            <person name="Tromans A."/>
            <person name="Van Helmond Z."/>
            <person name="Wall M."/>
            <person name="Wallis J.M."/>
            <person name="White S."/>
            <person name="Whitehead S.L."/>
            <person name="Wilkinson J.E."/>
            <person name="Willey D.L."/>
            <person name="Williams H."/>
            <person name="Wilming L."/>
            <person name="Wray P.W."/>
            <person name="Wu Z."/>
            <person name="Coulson A."/>
            <person name="Vaudin M."/>
            <person name="Sulston J.E."/>
            <person name="Durbin R.M."/>
            <person name="Hubbard T."/>
            <person name="Wooster R."/>
            <person name="Dunham I."/>
            <person name="Carter N.P."/>
            <person name="McVean G."/>
            <person name="Ross M.T."/>
            <person name="Harrow J."/>
            <person name="Olson M.V."/>
            <person name="Beck S."/>
            <person name="Rogers J."/>
            <person name="Bentley D.R."/>
        </authorList>
    </citation>
    <scope>NUCLEOTIDE SEQUENCE [LARGE SCALE GENOMIC DNA]</scope>
</reference>
<reference key="4">
    <citation type="journal article" date="2004" name="Genome Res.">
        <title>The status, quality, and expansion of the NIH full-length cDNA project: the Mammalian Gene Collection (MGC).</title>
        <authorList>
            <consortium name="The MGC Project Team"/>
        </authorList>
    </citation>
    <scope>NUCLEOTIDE SEQUENCE [LARGE SCALE MRNA]</scope>
    <source>
        <tissue>Skin</tissue>
    </source>
</reference>
<reference key="5">
    <citation type="journal article" date="2017" name="PLoS Pathog.">
        <title>GPATCH3 negatively regulates RLR-mediated innate antiviral responses by disrupting the assembly of VISA signalosome.</title>
        <authorList>
            <person name="Nie Y."/>
            <person name="Ran Y."/>
            <person name="Zhang H.Y."/>
            <person name="Huang Z.F."/>
            <person name="Pan Z.Y."/>
            <person name="Wang S.Y."/>
            <person name="Wang Y.Y."/>
        </authorList>
    </citation>
    <scope>FUNCTION</scope>
    <scope>INTERACTION WITH MAVS</scope>
</reference>
<reference key="6">
    <citation type="journal article" date="2017" name="Sci. Rep.">
        <title>Whole-exome sequencing of congenital glaucoma patients reveals hypermorphic variants in GPATCH3, a new gene involved in ocular and craniofacial development.</title>
        <authorList>
            <person name="Ferre-Fernandez J.J."/>
            <person name="Aroca-Aguilar J.D."/>
            <person name="Medina-Trillo C."/>
            <person name="Bonet-Fernandez J.M."/>
            <person name="Mendez-Hernandez C.D."/>
            <person name="Morales-Fernandez L."/>
            <person name="Corton M."/>
            <person name="Cabanero-Valera M.J."/>
            <person name="Gut M."/>
            <person name="Tonda R."/>
            <person name="Ayuso C."/>
            <person name="Coca-Prados M."/>
            <person name="Garcia-Feijoo J."/>
            <person name="Escribano J."/>
        </authorList>
    </citation>
    <scope>FUNCTION</scope>
    <scope>TISSUE SPECIFICITY</scope>
    <scope>SUBCELLULAR LOCATION</scope>
    <scope>POSSIBLE INVOLVEMENT IN CONGENITAL GLAUCOMA</scope>
    <scope>VARIANTS MET-23; CYS-137; SER-234 AND GLU-475</scope>
    <scope>CHARACTERIZATION OF VARIANTS SER-234 AND GLU-475</scope>
</reference>